<name>Y2927_MYCTU</name>
<feature type="chain" id="PRO_0000104109" description="Uncharacterized protein Rv2927c">
    <location>
        <begin position="1"/>
        <end position="245"/>
    </location>
</feature>
<keyword id="KW-1185">Reference proteome</keyword>
<protein>
    <recommendedName>
        <fullName>Uncharacterized protein Rv2927c</fullName>
    </recommendedName>
</protein>
<dbReference type="EMBL" id="AL123456">
    <property type="protein sequence ID" value="CCP45730.1"/>
    <property type="molecule type" value="Genomic_DNA"/>
</dbReference>
<dbReference type="PIR" id="G70748">
    <property type="entry name" value="G70748"/>
</dbReference>
<dbReference type="RefSeq" id="NP_217443.1">
    <property type="nucleotide sequence ID" value="NC_000962.3"/>
</dbReference>
<dbReference type="SMR" id="P9WL15"/>
<dbReference type="STRING" id="83332.Rv2927c"/>
<dbReference type="PaxDb" id="83332-Rv2927c"/>
<dbReference type="DNASU" id="887317"/>
<dbReference type="GeneID" id="887317"/>
<dbReference type="KEGG" id="mtu:Rv2927c"/>
<dbReference type="KEGG" id="mtv:RVBD_2927c"/>
<dbReference type="TubercuList" id="Rv2927c"/>
<dbReference type="eggNOG" id="COG3599">
    <property type="taxonomic scope" value="Bacteria"/>
</dbReference>
<dbReference type="InParanoid" id="P9WL15"/>
<dbReference type="OrthoDB" id="3291843at2"/>
<dbReference type="PhylomeDB" id="P9WL15"/>
<dbReference type="Proteomes" id="UP000001584">
    <property type="component" value="Chromosome"/>
</dbReference>
<dbReference type="CDD" id="cd06503">
    <property type="entry name" value="ATP-synt_Fo_b"/>
    <property type="match status" value="1"/>
</dbReference>
<dbReference type="Gene3D" id="1.20.5.620">
    <property type="entry name" value="F1F0 ATP synthase subunit B, membrane domain"/>
    <property type="match status" value="2"/>
</dbReference>
<dbReference type="PANTHER" id="PTHR38010">
    <property type="entry name" value="SLR0848 PROTEIN"/>
    <property type="match status" value="1"/>
</dbReference>
<dbReference type="PANTHER" id="PTHR38010:SF1">
    <property type="entry name" value="SLR0848 PROTEIN"/>
    <property type="match status" value="1"/>
</dbReference>
<accession>P9WL15</accession>
<accession>L0TB20</accession>
<accession>P65059</accession>
<accession>Q10973</accession>
<reference key="1">
    <citation type="journal article" date="1998" name="Nature">
        <title>Deciphering the biology of Mycobacterium tuberculosis from the complete genome sequence.</title>
        <authorList>
            <person name="Cole S.T."/>
            <person name="Brosch R."/>
            <person name="Parkhill J."/>
            <person name="Garnier T."/>
            <person name="Churcher C.M."/>
            <person name="Harris D.E."/>
            <person name="Gordon S.V."/>
            <person name="Eiglmeier K."/>
            <person name="Gas S."/>
            <person name="Barry C.E. III"/>
            <person name="Tekaia F."/>
            <person name="Badcock K."/>
            <person name="Basham D."/>
            <person name="Brown D."/>
            <person name="Chillingworth T."/>
            <person name="Connor R."/>
            <person name="Davies R.M."/>
            <person name="Devlin K."/>
            <person name="Feltwell T."/>
            <person name="Gentles S."/>
            <person name="Hamlin N."/>
            <person name="Holroyd S."/>
            <person name="Hornsby T."/>
            <person name="Jagels K."/>
            <person name="Krogh A."/>
            <person name="McLean J."/>
            <person name="Moule S."/>
            <person name="Murphy L.D."/>
            <person name="Oliver S."/>
            <person name="Osborne J."/>
            <person name="Quail M.A."/>
            <person name="Rajandream M.A."/>
            <person name="Rogers J."/>
            <person name="Rutter S."/>
            <person name="Seeger K."/>
            <person name="Skelton S."/>
            <person name="Squares S."/>
            <person name="Squares R."/>
            <person name="Sulston J.E."/>
            <person name="Taylor K."/>
            <person name="Whitehead S."/>
            <person name="Barrell B.G."/>
        </authorList>
    </citation>
    <scope>NUCLEOTIDE SEQUENCE [LARGE SCALE GENOMIC DNA]</scope>
    <source>
        <strain>ATCC 25618 / H37Rv</strain>
    </source>
</reference>
<reference key="2">
    <citation type="journal article" date="2011" name="Mol. Cell. Proteomics">
        <title>Proteogenomic analysis of Mycobacterium tuberculosis by high resolution mass spectrometry.</title>
        <authorList>
            <person name="Kelkar D.S."/>
            <person name="Kumar D."/>
            <person name="Kumar P."/>
            <person name="Balakrishnan L."/>
            <person name="Muthusamy B."/>
            <person name="Yadav A.K."/>
            <person name="Shrivastava P."/>
            <person name="Marimuthu A."/>
            <person name="Anand S."/>
            <person name="Sundaram H."/>
            <person name="Kingsbury R."/>
            <person name="Harsha H.C."/>
            <person name="Nair B."/>
            <person name="Prasad T.S."/>
            <person name="Chauhan D.S."/>
            <person name="Katoch K."/>
            <person name="Katoch V.M."/>
            <person name="Kumar P."/>
            <person name="Chaerkady R."/>
            <person name="Ramachandran S."/>
            <person name="Dash D."/>
            <person name="Pandey A."/>
        </authorList>
    </citation>
    <scope>IDENTIFICATION BY MASS SPECTROMETRY [LARGE SCALE ANALYSIS]</scope>
    <source>
        <strain>ATCC 25618 / H37Rv</strain>
    </source>
</reference>
<proteinExistence type="evidence at protein level"/>
<sequence length="245" mass="26986">MYRVFEALDELSAIVEEARGVPMTAGCVVPRGDVLELIDDIKDAIPGELDDAQDVLDARDSMLQDAKTHADSMVSSATTEAESILNHARTEADRILSDAKAQADRMVSEARQHSERMVADAREEAIRIATAAKREYEASVSRAQAECDRLIENGNISYEKAVQEGIKEQQRLVSQNEVVAAANAESTRLVDTAHAEADRLRGECDIYVDNKLAEFEEFLNGTLRSVGRGRHQLRTAAGTHDYAVR</sequence>
<organism>
    <name type="scientific">Mycobacterium tuberculosis (strain ATCC 25618 / H37Rv)</name>
    <dbReference type="NCBI Taxonomy" id="83332"/>
    <lineage>
        <taxon>Bacteria</taxon>
        <taxon>Bacillati</taxon>
        <taxon>Actinomycetota</taxon>
        <taxon>Actinomycetes</taxon>
        <taxon>Mycobacteriales</taxon>
        <taxon>Mycobacteriaceae</taxon>
        <taxon>Mycobacterium</taxon>
        <taxon>Mycobacterium tuberculosis complex</taxon>
    </lineage>
</organism>
<gene>
    <name type="ordered locus">Rv2927c</name>
    <name type="ORF">MTCY338.16c</name>
</gene>